<proteinExistence type="inferred from homology"/>
<feature type="chain" id="PRO_1000085111" description="Protein GrpE">
    <location>
        <begin position="1"/>
        <end position="204"/>
    </location>
</feature>
<feature type="region of interest" description="Disordered" evidence="2">
    <location>
        <begin position="1"/>
        <end position="52"/>
    </location>
</feature>
<feature type="compositionally biased region" description="Basic and acidic residues" evidence="2">
    <location>
        <begin position="7"/>
        <end position="22"/>
    </location>
</feature>
<feature type="compositionally biased region" description="Basic and acidic residues" evidence="2">
    <location>
        <begin position="38"/>
        <end position="52"/>
    </location>
</feature>
<comment type="function">
    <text evidence="1">Participates actively in the response to hyperosmotic and heat shock by preventing the aggregation of stress-denatured proteins, in association with DnaK and GrpE. It is the nucleotide exchange factor for DnaK and may function as a thermosensor. Unfolded proteins bind initially to DnaJ; upon interaction with the DnaJ-bound protein, DnaK hydrolyzes its bound ATP, resulting in the formation of a stable complex. GrpE releases ADP from DnaK; ATP binding to DnaK triggers the release of the substrate protein, thus completing the reaction cycle. Several rounds of ATP-dependent interactions between DnaJ, DnaK and GrpE are required for fully efficient folding.</text>
</comment>
<comment type="subunit">
    <text evidence="1">Homodimer.</text>
</comment>
<comment type="subcellular location">
    <subcellularLocation>
        <location evidence="1">Cytoplasm</location>
    </subcellularLocation>
</comment>
<comment type="similarity">
    <text evidence="1">Belongs to the GrpE family.</text>
</comment>
<comment type="sequence caution" evidence="3">
    <conflict type="erroneous initiation">
        <sequence resource="EMBL-CDS" id="ABS77875"/>
    </conflict>
</comment>
<keyword id="KW-0143">Chaperone</keyword>
<keyword id="KW-0963">Cytoplasm</keyword>
<keyword id="KW-0346">Stress response</keyword>
<organism>
    <name type="scientific">Coxiella burnetii (strain Dugway 5J108-111)</name>
    <dbReference type="NCBI Taxonomy" id="434922"/>
    <lineage>
        <taxon>Bacteria</taxon>
        <taxon>Pseudomonadati</taxon>
        <taxon>Pseudomonadota</taxon>
        <taxon>Gammaproteobacteria</taxon>
        <taxon>Legionellales</taxon>
        <taxon>Coxiellaceae</taxon>
        <taxon>Coxiella</taxon>
    </lineage>
</organism>
<gene>
    <name evidence="1" type="primary">grpE</name>
    <name type="ordered locus">CBUD_1381</name>
</gene>
<protein>
    <recommendedName>
        <fullName evidence="1">Protein GrpE</fullName>
    </recommendedName>
    <alternativeName>
        <fullName evidence="1">HSP-70 cofactor</fullName>
    </alternativeName>
</protein>
<reference key="1">
    <citation type="journal article" date="2009" name="Infect. Immun.">
        <title>Comparative genomics reveal extensive transposon-mediated genomic plasticity and diversity among potential effector proteins within the genus Coxiella.</title>
        <authorList>
            <person name="Beare P.A."/>
            <person name="Unsworth N."/>
            <person name="Andoh M."/>
            <person name="Voth D.E."/>
            <person name="Omsland A."/>
            <person name="Gilk S.D."/>
            <person name="Williams K.P."/>
            <person name="Sobral B.W."/>
            <person name="Kupko J.J. III"/>
            <person name="Porcella S.F."/>
            <person name="Samuel J.E."/>
            <person name="Heinzen R.A."/>
        </authorList>
    </citation>
    <scope>NUCLEOTIDE SEQUENCE [LARGE SCALE GENOMIC DNA]</scope>
    <source>
        <strain>Dugway 5J108-111</strain>
    </source>
</reference>
<sequence length="204" mass="22834">MSSKNNPESETKAKNKWEKVMEAEEEQEEGGGDGSQEMEPHREGLEFPSREKLEGQLTRMEHKVDEYKTQYLRAQAEMDNLRKRIEREKADIIKFGSKQLITDLLPVADSLIHGLESPASEDPQVKSMRDGMSLTLDLLHNTLAKHGVQVINPNPGDPFDPALHEAMSVQAVPDAKPDTIIQVLQKGYQLNGRVLRAARVIVAG</sequence>
<evidence type="ECO:0000255" key="1">
    <source>
        <dbReference type="HAMAP-Rule" id="MF_01151"/>
    </source>
</evidence>
<evidence type="ECO:0000256" key="2">
    <source>
        <dbReference type="SAM" id="MobiDB-lite"/>
    </source>
</evidence>
<evidence type="ECO:0000305" key="3"/>
<dbReference type="EMBL" id="CP000733">
    <property type="protein sequence ID" value="ABS77875.2"/>
    <property type="status" value="ALT_INIT"/>
    <property type="molecule type" value="Genomic_DNA"/>
</dbReference>
<dbReference type="SMR" id="A9KG91"/>
<dbReference type="KEGG" id="cbd:CBUD_1381"/>
<dbReference type="HOGENOM" id="CLU_057217_6_0_6"/>
<dbReference type="Proteomes" id="UP000008555">
    <property type="component" value="Chromosome"/>
</dbReference>
<dbReference type="GO" id="GO:0005829">
    <property type="term" value="C:cytosol"/>
    <property type="evidence" value="ECO:0007669"/>
    <property type="project" value="TreeGrafter"/>
</dbReference>
<dbReference type="GO" id="GO:0000774">
    <property type="term" value="F:adenyl-nucleotide exchange factor activity"/>
    <property type="evidence" value="ECO:0007669"/>
    <property type="project" value="InterPro"/>
</dbReference>
<dbReference type="GO" id="GO:0042803">
    <property type="term" value="F:protein homodimerization activity"/>
    <property type="evidence" value="ECO:0007669"/>
    <property type="project" value="InterPro"/>
</dbReference>
<dbReference type="GO" id="GO:0051087">
    <property type="term" value="F:protein-folding chaperone binding"/>
    <property type="evidence" value="ECO:0007669"/>
    <property type="project" value="InterPro"/>
</dbReference>
<dbReference type="GO" id="GO:0051082">
    <property type="term" value="F:unfolded protein binding"/>
    <property type="evidence" value="ECO:0007669"/>
    <property type="project" value="TreeGrafter"/>
</dbReference>
<dbReference type="GO" id="GO:0006457">
    <property type="term" value="P:protein folding"/>
    <property type="evidence" value="ECO:0007669"/>
    <property type="project" value="InterPro"/>
</dbReference>
<dbReference type="CDD" id="cd00446">
    <property type="entry name" value="GrpE"/>
    <property type="match status" value="1"/>
</dbReference>
<dbReference type="FunFam" id="2.30.22.10:FF:000001">
    <property type="entry name" value="Protein GrpE"/>
    <property type="match status" value="1"/>
</dbReference>
<dbReference type="Gene3D" id="3.90.20.20">
    <property type="match status" value="1"/>
</dbReference>
<dbReference type="Gene3D" id="2.30.22.10">
    <property type="entry name" value="Head domain of nucleotide exchange factor GrpE"/>
    <property type="match status" value="1"/>
</dbReference>
<dbReference type="HAMAP" id="MF_01151">
    <property type="entry name" value="GrpE"/>
    <property type="match status" value="1"/>
</dbReference>
<dbReference type="InterPro" id="IPR000740">
    <property type="entry name" value="GrpE"/>
</dbReference>
<dbReference type="InterPro" id="IPR013805">
    <property type="entry name" value="GrpE_coiled_coil"/>
</dbReference>
<dbReference type="InterPro" id="IPR009012">
    <property type="entry name" value="GrpE_head"/>
</dbReference>
<dbReference type="NCBIfam" id="NF010751">
    <property type="entry name" value="PRK14154.1"/>
    <property type="match status" value="1"/>
</dbReference>
<dbReference type="PANTHER" id="PTHR21237">
    <property type="entry name" value="GRPE PROTEIN"/>
    <property type="match status" value="1"/>
</dbReference>
<dbReference type="PANTHER" id="PTHR21237:SF23">
    <property type="entry name" value="GRPE PROTEIN HOMOLOG, MITOCHONDRIAL"/>
    <property type="match status" value="1"/>
</dbReference>
<dbReference type="Pfam" id="PF01025">
    <property type="entry name" value="GrpE"/>
    <property type="match status" value="1"/>
</dbReference>
<dbReference type="PRINTS" id="PR00773">
    <property type="entry name" value="GRPEPROTEIN"/>
</dbReference>
<dbReference type="SUPFAM" id="SSF58014">
    <property type="entry name" value="Coiled-coil domain of nucleotide exchange factor GrpE"/>
    <property type="match status" value="1"/>
</dbReference>
<dbReference type="SUPFAM" id="SSF51064">
    <property type="entry name" value="Head domain of nucleotide exchange factor GrpE"/>
    <property type="match status" value="1"/>
</dbReference>
<dbReference type="PROSITE" id="PS01071">
    <property type="entry name" value="GRPE"/>
    <property type="match status" value="1"/>
</dbReference>
<accession>A9KG91</accession>
<name>GRPE_COXBN</name>